<accession>P64870</accession>
<accession>A0A1R3XYZ3</accession>
<accession>Q50581</accession>
<accession>X2BI86</accession>
<comment type="similarity">
    <text evidence="1">To M.leprae L518_C2_147 and M.tuberculosis Rv1524.</text>
</comment>
<proteinExistence type="predicted"/>
<sequence>MKFVLAVHGTRGDVEPCAAVGVELRRRGHAVHMAVPPNLIEFVESAGLTGVAYGPDSDEQINTVAAFVRNLTRAQNPLNLARAVKELFVEGWAEMGTTLTTLADGADLVMTGQTYHGVAANVAEYYDIPAAALHHFPMQVNGQIAIPSIPTPATLVRATMKVSWRLYAYVSKDADRAQRRELGLPPAPAPAVRRLAERGAPEIQAYDPVFFPGLAAEWSDRRPFVGPLTMELHSEPNEELESWIAAGTPPIYFGFGSTPVQTPVQTLAMISDVCAQLGERALIYSPAANSTRIRHADHVKRVGLVNYSTILPKCRAVVHHGGAGTTAAGLRAGMPTLILWDVADQPIWAGAVQRLKVGSAKRFTNITRGSLLKELRSILAPECAARAREISTRMTRPTAAVTAAADLLEATARQTPGSTPSSSPGR</sequence>
<feature type="chain" id="PRO_0000103873" description="Uncharacterized protein Mb1553c">
    <location>
        <begin position="1"/>
        <end position="426"/>
    </location>
</feature>
<evidence type="ECO:0000305" key="1"/>
<dbReference type="EMBL" id="LT708304">
    <property type="protein sequence ID" value="SIU00156.1"/>
    <property type="molecule type" value="Genomic_DNA"/>
</dbReference>
<dbReference type="RefSeq" id="NP_855205.1">
    <property type="nucleotide sequence ID" value="NC_002945.3"/>
</dbReference>
<dbReference type="RefSeq" id="WP_003407676.1">
    <property type="nucleotide sequence ID" value="NC_002945.4"/>
</dbReference>
<dbReference type="SMR" id="P64870"/>
<dbReference type="KEGG" id="mbo:BQ2027_MB1553C"/>
<dbReference type="PATRIC" id="fig|233413.5.peg.1698"/>
<dbReference type="Proteomes" id="UP000001419">
    <property type="component" value="Chromosome"/>
</dbReference>
<dbReference type="GO" id="GO:0016758">
    <property type="term" value="F:hexosyltransferase activity"/>
    <property type="evidence" value="ECO:0007669"/>
    <property type="project" value="InterPro"/>
</dbReference>
<dbReference type="GO" id="GO:0008194">
    <property type="term" value="F:UDP-glycosyltransferase activity"/>
    <property type="evidence" value="ECO:0007669"/>
    <property type="project" value="InterPro"/>
</dbReference>
<dbReference type="GO" id="GO:0005975">
    <property type="term" value="P:carbohydrate metabolic process"/>
    <property type="evidence" value="ECO:0007669"/>
    <property type="project" value="InterPro"/>
</dbReference>
<dbReference type="GO" id="GO:0030259">
    <property type="term" value="P:lipid glycosylation"/>
    <property type="evidence" value="ECO:0007669"/>
    <property type="project" value="InterPro"/>
</dbReference>
<dbReference type="GO" id="GO:0033072">
    <property type="term" value="P:vancomycin biosynthetic process"/>
    <property type="evidence" value="ECO:0007669"/>
    <property type="project" value="UniProtKB-ARBA"/>
</dbReference>
<dbReference type="CDD" id="cd03784">
    <property type="entry name" value="GT1_Gtf-like"/>
    <property type="match status" value="1"/>
</dbReference>
<dbReference type="FunFam" id="3.40.50.2000:FF:000170">
    <property type="entry name" value="Probable glycosyltransferase"/>
    <property type="match status" value="1"/>
</dbReference>
<dbReference type="FunFam" id="3.40.50.2000:FF:000009">
    <property type="entry name" value="Sterol 3-beta-glucosyltransferase UGT80A2"/>
    <property type="match status" value="1"/>
</dbReference>
<dbReference type="Gene3D" id="3.40.50.2000">
    <property type="entry name" value="Glycogen Phosphorylase B"/>
    <property type="match status" value="2"/>
</dbReference>
<dbReference type="InterPro" id="IPR010610">
    <property type="entry name" value="EryCIII-like_C"/>
</dbReference>
<dbReference type="InterPro" id="IPR050426">
    <property type="entry name" value="Glycosyltransferase_28"/>
</dbReference>
<dbReference type="InterPro" id="IPR004276">
    <property type="entry name" value="GlycoTrans_28_N"/>
</dbReference>
<dbReference type="InterPro" id="IPR002213">
    <property type="entry name" value="UDP_glucos_trans"/>
</dbReference>
<dbReference type="PANTHER" id="PTHR48050">
    <property type="entry name" value="STEROL 3-BETA-GLUCOSYLTRANSFERASE"/>
    <property type="match status" value="1"/>
</dbReference>
<dbReference type="PANTHER" id="PTHR48050:SF13">
    <property type="entry name" value="STEROL 3-BETA-GLUCOSYLTRANSFERASE UGT80A2"/>
    <property type="match status" value="1"/>
</dbReference>
<dbReference type="Pfam" id="PF06722">
    <property type="entry name" value="EryCIII-like_C"/>
    <property type="match status" value="1"/>
</dbReference>
<dbReference type="Pfam" id="PF03033">
    <property type="entry name" value="Glyco_transf_28"/>
    <property type="match status" value="1"/>
</dbReference>
<dbReference type="SUPFAM" id="SSF53756">
    <property type="entry name" value="UDP-Glycosyltransferase/glycogen phosphorylase"/>
    <property type="match status" value="1"/>
</dbReference>
<organism>
    <name type="scientific">Mycobacterium bovis (strain ATCC BAA-935 / AF2122/97)</name>
    <dbReference type="NCBI Taxonomy" id="233413"/>
    <lineage>
        <taxon>Bacteria</taxon>
        <taxon>Bacillati</taxon>
        <taxon>Actinomycetota</taxon>
        <taxon>Actinomycetes</taxon>
        <taxon>Mycobacteriales</taxon>
        <taxon>Mycobacteriaceae</taxon>
        <taxon>Mycobacterium</taxon>
        <taxon>Mycobacterium tuberculosis complex</taxon>
    </lineage>
</organism>
<gene>
    <name type="ordered locus">BQ2027_MB1553C</name>
</gene>
<protein>
    <recommendedName>
        <fullName>Uncharacterized protein Mb1553c</fullName>
    </recommendedName>
</protein>
<reference key="1">
    <citation type="journal article" date="2003" name="Proc. Natl. Acad. Sci. U.S.A.">
        <title>The complete genome sequence of Mycobacterium bovis.</title>
        <authorList>
            <person name="Garnier T."/>
            <person name="Eiglmeier K."/>
            <person name="Camus J.-C."/>
            <person name="Medina N."/>
            <person name="Mansoor H."/>
            <person name="Pryor M."/>
            <person name="Duthoy S."/>
            <person name="Grondin S."/>
            <person name="Lacroix C."/>
            <person name="Monsempe C."/>
            <person name="Simon S."/>
            <person name="Harris B."/>
            <person name="Atkin R."/>
            <person name="Doggett J."/>
            <person name="Mayes R."/>
            <person name="Keating L."/>
            <person name="Wheeler P.R."/>
            <person name="Parkhill J."/>
            <person name="Barrell B.G."/>
            <person name="Cole S.T."/>
            <person name="Gordon S.V."/>
            <person name="Hewinson R.G."/>
        </authorList>
    </citation>
    <scope>NUCLEOTIDE SEQUENCE [LARGE SCALE GENOMIC DNA]</scope>
    <source>
        <strain>ATCC BAA-935 / AF2122/97</strain>
    </source>
</reference>
<reference key="2">
    <citation type="journal article" date="2017" name="Genome Announc.">
        <title>Updated reference genome sequence and annotation of Mycobacterium bovis AF2122/97.</title>
        <authorList>
            <person name="Malone K.M."/>
            <person name="Farrell D."/>
            <person name="Stuber T.P."/>
            <person name="Schubert O.T."/>
            <person name="Aebersold R."/>
            <person name="Robbe-Austerman S."/>
            <person name="Gordon S.V."/>
        </authorList>
    </citation>
    <scope>NUCLEOTIDE SEQUENCE [LARGE SCALE GENOMIC DNA]</scope>
    <scope>GENOME REANNOTATION</scope>
    <source>
        <strain>ATCC BAA-935 / AF2122/97</strain>
    </source>
</reference>
<name>Y1553_MYCBO</name>
<keyword id="KW-1185">Reference proteome</keyword>